<protein>
    <recommendedName>
        <fullName>Neural cell adhesion molecule L1-like protein</fullName>
    </recommendedName>
    <alternativeName>
        <fullName>Close homolog of L1</fullName>
    </alternativeName>
    <component>
        <recommendedName>
            <fullName>Processed neural cell adhesion molecule L1-like protein</fullName>
        </recommendedName>
    </component>
</protein>
<evidence type="ECO:0000250" key="1"/>
<evidence type="ECO:0000250" key="2">
    <source>
        <dbReference type="UniProtKB" id="P70232"/>
    </source>
</evidence>
<evidence type="ECO:0000255" key="3"/>
<evidence type="ECO:0000255" key="4">
    <source>
        <dbReference type="PROSITE-ProRule" id="PRU00114"/>
    </source>
</evidence>
<evidence type="ECO:0000255" key="5">
    <source>
        <dbReference type="PROSITE-ProRule" id="PRU00316"/>
    </source>
</evidence>
<evidence type="ECO:0000256" key="6">
    <source>
        <dbReference type="SAM" id="MobiDB-lite"/>
    </source>
</evidence>
<evidence type="ECO:0000269" key="7">
    <source>
    </source>
</evidence>
<evidence type="ECO:0000269" key="8">
    <source>
    </source>
</evidence>
<evidence type="ECO:0000269" key="9">
    <source>
    </source>
</evidence>
<evidence type="ECO:0000269" key="10">
    <source>
    </source>
</evidence>
<evidence type="ECO:0000269" key="11">
    <source ref="2"/>
</evidence>
<evidence type="ECO:0000303" key="12">
    <source>
    </source>
</evidence>
<evidence type="ECO:0000305" key="13"/>
<dbReference type="EMBL" id="AF002246">
    <property type="protein sequence ID" value="AAB60937.1"/>
    <property type="molecule type" value="mRNA"/>
</dbReference>
<dbReference type="EMBL" id="AB209329">
    <property type="protein sequence ID" value="BAD92566.1"/>
    <property type="status" value="ALT_INIT"/>
    <property type="molecule type" value="mRNA"/>
</dbReference>
<dbReference type="EMBL" id="AC011609">
    <property type="status" value="NOT_ANNOTATED_CDS"/>
    <property type="molecule type" value="Genomic_DNA"/>
</dbReference>
<dbReference type="EMBL" id="AC026187">
    <property type="status" value="NOT_ANNOTATED_CDS"/>
    <property type="molecule type" value="Genomic_DNA"/>
</dbReference>
<dbReference type="EMBL" id="BC104918">
    <property type="protein sequence ID" value="AAI04919.1"/>
    <property type="molecule type" value="mRNA"/>
</dbReference>
<dbReference type="EMBL" id="BC143496">
    <property type="protein sequence ID" value="AAI43497.1"/>
    <property type="molecule type" value="mRNA"/>
</dbReference>
<dbReference type="CCDS" id="CCDS2556.1">
    <molecule id="O00533-2"/>
</dbReference>
<dbReference type="CCDS" id="CCDS58812.1">
    <molecule id="O00533-1"/>
</dbReference>
<dbReference type="RefSeq" id="NP_001240316.1">
    <molecule id="O00533-1"/>
    <property type="nucleotide sequence ID" value="NM_001253387.2"/>
</dbReference>
<dbReference type="RefSeq" id="NP_006605.2">
    <molecule id="O00533-2"/>
    <property type="nucleotide sequence ID" value="NM_006614.3"/>
</dbReference>
<dbReference type="RefSeq" id="XP_006713001.1">
    <molecule id="O00533-2"/>
    <property type="nucleotide sequence ID" value="XM_006712938.2"/>
</dbReference>
<dbReference type="RefSeq" id="XP_006713002.1">
    <molecule id="O00533-2"/>
    <property type="nucleotide sequence ID" value="XM_006712939.4"/>
</dbReference>
<dbReference type="RefSeq" id="XP_006713003.1">
    <molecule id="O00533-2"/>
    <property type="nucleotide sequence ID" value="XM_006712940.4"/>
</dbReference>
<dbReference type="RefSeq" id="XP_011531594.1">
    <molecule id="O00533-2"/>
    <property type="nucleotide sequence ID" value="XM_011533292.2"/>
</dbReference>
<dbReference type="RefSeq" id="XP_011531596.1">
    <molecule id="O00533-1"/>
    <property type="nucleotide sequence ID" value="XM_011533294.2"/>
</dbReference>
<dbReference type="RefSeq" id="XP_011531597.1">
    <molecule id="O00533-1"/>
    <property type="nucleotide sequence ID" value="XM_011533295.2"/>
</dbReference>
<dbReference type="RefSeq" id="XP_016861055.1">
    <molecule id="O00533-2"/>
    <property type="nucleotide sequence ID" value="XM_017005566.2"/>
</dbReference>
<dbReference type="RefSeq" id="XP_016861056.1">
    <molecule id="O00533-2"/>
    <property type="nucleotide sequence ID" value="XM_017005567.2"/>
</dbReference>
<dbReference type="RefSeq" id="XP_016861057.1">
    <property type="nucleotide sequence ID" value="XM_017005568.1"/>
</dbReference>
<dbReference type="RefSeq" id="XP_016861058.1">
    <molecule id="O00533-1"/>
    <property type="nucleotide sequence ID" value="XM_017005569.2"/>
</dbReference>
<dbReference type="RefSeq" id="XP_016861059.1">
    <molecule id="O00533-1"/>
    <property type="nucleotide sequence ID" value="XM_017005570.2"/>
</dbReference>
<dbReference type="RefSeq" id="XP_016861060.1">
    <molecule id="O00533-1"/>
    <property type="nucleotide sequence ID" value="XM_017005571.2"/>
</dbReference>
<dbReference type="SMR" id="O00533"/>
<dbReference type="BioGRID" id="115975">
    <property type="interactions" value="13"/>
</dbReference>
<dbReference type="FunCoup" id="O00533">
    <property type="interactions" value="385"/>
</dbReference>
<dbReference type="IntAct" id="O00533">
    <property type="interactions" value="8"/>
</dbReference>
<dbReference type="STRING" id="9606.ENSP00000256509"/>
<dbReference type="GlyConnect" id="1960">
    <property type="glycosylation" value="11 N-Linked glycans (9 sites)"/>
</dbReference>
<dbReference type="GlyCosmos" id="O00533">
    <property type="glycosylation" value="15 sites, 12 glycans"/>
</dbReference>
<dbReference type="GlyGen" id="O00533">
    <property type="glycosylation" value="16 sites, 21 N-linked glycans (10 sites)"/>
</dbReference>
<dbReference type="iPTMnet" id="O00533"/>
<dbReference type="PhosphoSitePlus" id="O00533"/>
<dbReference type="SwissPalm" id="O00533"/>
<dbReference type="BioMuta" id="CHL1"/>
<dbReference type="jPOST" id="O00533"/>
<dbReference type="MassIVE" id="O00533"/>
<dbReference type="PaxDb" id="9606-ENSP00000256509"/>
<dbReference type="PeptideAtlas" id="O00533"/>
<dbReference type="ProteomicsDB" id="47957">
    <molecule id="O00533-1"/>
</dbReference>
<dbReference type="ProteomicsDB" id="47958">
    <molecule id="O00533-2"/>
</dbReference>
<dbReference type="Antibodypedia" id="1160">
    <property type="antibodies" value="139 antibodies from 25 providers"/>
</dbReference>
<dbReference type="DNASU" id="10752"/>
<dbReference type="Ensembl" id="ENST00000256509.7">
    <molecule id="O00533-2"/>
    <property type="protein sequence ID" value="ENSP00000256509.2"/>
    <property type="gene ID" value="ENSG00000134121.10"/>
</dbReference>
<dbReference type="Ensembl" id="ENST00000397491.6">
    <molecule id="O00533-1"/>
    <property type="protein sequence ID" value="ENSP00000380628.2"/>
    <property type="gene ID" value="ENSG00000134121.10"/>
</dbReference>
<dbReference type="GeneID" id="10752"/>
<dbReference type="KEGG" id="hsa:10752"/>
<dbReference type="MANE-Select" id="ENST00000256509.7">
    <molecule id="O00533-2"/>
    <property type="protein sequence ID" value="ENSP00000256509.2"/>
    <property type="RefSeq nucleotide sequence ID" value="NM_006614.4"/>
    <property type="RefSeq protein sequence ID" value="NP_006605.2"/>
</dbReference>
<dbReference type="UCSC" id="uc003bot.4">
    <molecule id="O00533-1"/>
    <property type="organism name" value="human"/>
</dbReference>
<dbReference type="AGR" id="HGNC:1939"/>
<dbReference type="CTD" id="10752"/>
<dbReference type="DisGeNET" id="10752"/>
<dbReference type="GeneCards" id="CHL1"/>
<dbReference type="HGNC" id="HGNC:1939">
    <property type="gene designation" value="CHL1"/>
</dbReference>
<dbReference type="HPA" id="ENSG00000134121">
    <property type="expression patterns" value="Tissue enhanced (brain, ovary)"/>
</dbReference>
<dbReference type="MalaCards" id="CHL1"/>
<dbReference type="MIM" id="607416">
    <property type="type" value="gene"/>
</dbReference>
<dbReference type="neXtProt" id="NX_O00533"/>
<dbReference type="OpenTargets" id="ENSG00000134121"/>
<dbReference type="PharmGKB" id="PA26470"/>
<dbReference type="VEuPathDB" id="HostDB:ENSG00000134121"/>
<dbReference type="eggNOG" id="KOG3513">
    <property type="taxonomic scope" value="Eukaryota"/>
</dbReference>
<dbReference type="GeneTree" id="ENSGT00940000160080"/>
<dbReference type="InParanoid" id="O00533"/>
<dbReference type="OMA" id="RARHEFH"/>
<dbReference type="OrthoDB" id="6244967at2759"/>
<dbReference type="PAN-GO" id="O00533">
    <property type="GO annotations" value="0 GO annotations based on evolutionary models"/>
</dbReference>
<dbReference type="PhylomeDB" id="O00533"/>
<dbReference type="TreeFam" id="TF351098"/>
<dbReference type="PathwayCommons" id="O00533"/>
<dbReference type="Reactome" id="R-HSA-447041">
    <property type="pathway name" value="CHL1 interactions"/>
</dbReference>
<dbReference type="SignaLink" id="O00533"/>
<dbReference type="SIGNOR" id="O00533"/>
<dbReference type="BioGRID-ORCS" id="10752">
    <property type="hits" value="9 hits in 1141 CRISPR screens"/>
</dbReference>
<dbReference type="CD-CODE" id="FB4E32DD">
    <property type="entry name" value="Presynaptic clusters and postsynaptic densities"/>
</dbReference>
<dbReference type="ChiTaRS" id="CHL1">
    <property type="organism name" value="human"/>
</dbReference>
<dbReference type="GeneWiki" id="CHL1"/>
<dbReference type="GenomeRNAi" id="10752"/>
<dbReference type="Pharos" id="O00533">
    <property type="development level" value="Tbio"/>
</dbReference>
<dbReference type="PRO" id="PR:O00533"/>
<dbReference type="Proteomes" id="UP000005640">
    <property type="component" value="Chromosome 3"/>
</dbReference>
<dbReference type="RNAct" id="O00533">
    <property type="molecule type" value="protein"/>
</dbReference>
<dbReference type="Bgee" id="ENSG00000134121">
    <property type="expression patterns" value="Expressed in cortical plate and 181 other cell types or tissues"/>
</dbReference>
<dbReference type="ExpressionAtlas" id="O00533">
    <property type="expression patterns" value="baseline and differential"/>
</dbReference>
<dbReference type="GO" id="GO:0045177">
    <property type="term" value="C:apical part of cell"/>
    <property type="evidence" value="ECO:0007669"/>
    <property type="project" value="Ensembl"/>
</dbReference>
<dbReference type="GO" id="GO:0030425">
    <property type="term" value="C:dendrite"/>
    <property type="evidence" value="ECO:0007669"/>
    <property type="project" value="Ensembl"/>
</dbReference>
<dbReference type="GO" id="GO:0070062">
    <property type="term" value="C:extracellular exosome"/>
    <property type="evidence" value="ECO:0007005"/>
    <property type="project" value="UniProtKB"/>
</dbReference>
<dbReference type="GO" id="GO:0016020">
    <property type="term" value="C:membrane"/>
    <property type="evidence" value="ECO:0000304"/>
    <property type="project" value="ProtInc"/>
</dbReference>
<dbReference type="GO" id="GO:0043005">
    <property type="term" value="C:neuron projection"/>
    <property type="evidence" value="ECO:0000318"/>
    <property type="project" value="GO_Central"/>
</dbReference>
<dbReference type="GO" id="GO:0005886">
    <property type="term" value="C:plasma membrane"/>
    <property type="evidence" value="ECO:0007669"/>
    <property type="project" value="UniProtKB-SubCell"/>
</dbReference>
<dbReference type="GO" id="GO:0002020">
    <property type="term" value="F:protease binding"/>
    <property type="evidence" value="ECO:0007669"/>
    <property type="project" value="Ensembl"/>
</dbReference>
<dbReference type="GO" id="GO:0008344">
    <property type="term" value="P:adult locomotory behavior"/>
    <property type="evidence" value="ECO:0007669"/>
    <property type="project" value="Ensembl"/>
</dbReference>
<dbReference type="GO" id="GO:0007411">
    <property type="term" value="P:axon guidance"/>
    <property type="evidence" value="ECO:0007669"/>
    <property type="project" value="Ensembl"/>
</dbReference>
<dbReference type="GO" id="GO:0007155">
    <property type="term" value="P:cell adhesion"/>
    <property type="evidence" value="ECO:0000304"/>
    <property type="project" value="ProtInc"/>
</dbReference>
<dbReference type="GO" id="GO:0050890">
    <property type="term" value="P:cognition"/>
    <property type="evidence" value="ECO:0007669"/>
    <property type="project" value="Ensembl"/>
</dbReference>
<dbReference type="GO" id="GO:0035640">
    <property type="term" value="P:exploration behavior"/>
    <property type="evidence" value="ECO:0007669"/>
    <property type="project" value="Ensembl"/>
</dbReference>
<dbReference type="GO" id="GO:0043524">
    <property type="term" value="P:negative regulation of neuron apoptotic process"/>
    <property type="evidence" value="ECO:0007669"/>
    <property type="project" value="Ensembl"/>
</dbReference>
<dbReference type="GO" id="GO:0001764">
    <property type="term" value="P:neuron migration"/>
    <property type="evidence" value="ECO:0007669"/>
    <property type="project" value="Ensembl"/>
</dbReference>
<dbReference type="GO" id="GO:0007165">
    <property type="term" value="P:signal transduction"/>
    <property type="evidence" value="ECO:0000304"/>
    <property type="project" value="ProtInc"/>
</dbReference>
<dbReference type="CDD" id="cd00063">
    <property type="entry name" value="FN3"/>
    <property type="match status" value="4"/>
</dbReference>
<dbReference type="CDD" id="cd00096">
    <property type="entry name" value="Ig"/>
    <property type="match status" value="1"/>
</dbReference>
<dbReference type="CDD" id="cd05731">
    <property type="entry name" value="Ig3_L1-CAM_like"/>
    <property type="match status" value="1"/>
</dbReference>
<dbReference type="CDD" id="cd04978">
    <property type="entry name" value="Ig4_L1-NrCAM_like"/>
    <property type="match status" value="1"/>
</dbReference>
<dbReference type="CDD" id="cd05845">
    <property type="entry name" value="IgI_2_L1-CAM_like"/>
    <property type="match status" value="1"/>
</dbReference>
<dbReference type="FunFam" id="2.60.40.10:FF:000057">
    <property type="entry name" value="neural cell adhesion molecule L1"/>
    <property type="match status" value="1"/>
</dbReference>
<dbReference type="FunFam" id="2.60.40.10:FF:000063">
    <property type="entry name" value="neural cell adhesion molecule L1"/>
    <property type="match status" value="1"/>
</dbReference>
<dbReference type="FunFam" id="2.60.40.10:FF:000367">
    <property type="entry name" value="Neural cell adhesion molecule L1-like protein"/>
    <property type="match status" value="1"/>
</dbReference>
<dbReference type="FunFam" id="2.60.40.10:FF:000418">
    <property type="entry name" value="Neural cell adhesion molecule L1-like protein"/>
    <property type="match status" value="1"/>
</dbReference>
<dbReference type="FunFam" id="2.60.40.10:FF:000703">
    <property type="entry name" value="Neural cell adhesion molecule L1-like protein"/>
    <property type="match status" value="1"/>
</dbReference>
<dbReference type="FunFam" id="2.60.40.10:FF:000768">
    <property type="entry name" value="Neural cell adhesion molecule L1-like protein"/>
    <property type="match status" value="1"/>
</dbReference>
<dbReference type="FunFam" id="2.60.40.10:FF:000535">
    <property type="entry name" value="neural cell adhesion molecule L1-like protein isoform X1"/>
    <property type="match status" value="1"/>
</dbReference>
<dbReference type="FunFam" id="2.60.40.10:FF:000742">
    <property type="entry name" value="neural cell adhesion molecule L1-like protein isoform X2"/>
    <property type="match status" value="1"/>
</dbReference>
<dbReference type="FunFam" id="2.60.40.10:FF:000005">
    <property type="entry name" value="Neuronal cell adhesion molecule"/>
    <property type="match status" value="1"/>
</dbReference>
<dbReference type="FunFam" id="2.60.40.10:FF:000038">
    <property type="entry name" value="Neuronal cell adhesion molecule"/>
    <property type="match status" value="1"/>
</dbReference>
<dbReference type="Gene3D" id="2.60.40.10">
    <property type="entry name" value="Immunoglobulins"/>
    <property type="match status" value="10"/>
</dbReference>
<dbReference type="InterPro" id="IPR003961">
    <property type="entry name" value="FN3_dom"/>
</dbReference>
<dbReference type="InterPro" id="IPR036116">
    <property type="entry name" value="FN3_sf"/>
</dbReference>
<dbReference type="InterPro" id="IPR007110">
    <property type="entry name" value="Ig-like_dom"/>
</dbReference>
<dbReference type="InterPro" id="IPR036179">
    <property type="entry name" value="Ig-like_dom_sf"/>
</dbReference>
<dbReference type="InterPro" id="IPR013783">
    <property type="entry name" value="Ig-like_fold"/>
</dbReference>
<dbReference type="InterPro" id="IPR013098">
    <property type="entry name" value="Ig_I-set"/>
</dbReference>
<dbReference type="InterPro" id="IPR003599">
    <property type="entry name" value="Ig_sub"/>
</dbReference>
<dbReference type="InterPro" id="IPR003598">
    <property type="entry name" value="Ig_sub2"/>
</dbReference>
<dbReference type="InterPro" id="IPR013151">
    <property type="entry name" value="Immunoglobulin_dom"/>
</dbReference>
<dbReference type="InterPro" id="IPR051170">
    <property type="entry name" value="Neural/epithelial_adhesion"/>
</dbReference>
<dbReference type="InterPro" id="IPR026966">
    <property type="entry name" value="Neurofascin/L1/NrCAM_C"/>
</dbReference>
<dbReference type="PANTHER" id="PTHR12231">
    <property type="entry name" value="CTX-RELATED TYPE I TRANSMEMBRANE PROTEIN"/>
    <property type="match status" value="1"/>
</dbReference>
<dbReference type="PANTHER" id="PTHR12231:SF257">
    <property type="entry name" value="NEURAL CELL ADHESION MOLECULE L1-LIKE PROTEIN"/>
    <property type="match status" value="1"/>
</dbReference>
<dbReference type="Pfam" id="PF13882">
    <property type="entry name" value="Bravo_FIGEY"/>
    <property type="match status" value="1"/>
</dbReference>
<dbReference type="Pfam" id="PF00041">
    <property type="entry name" value="fn3"/>
    <property type="match status" value="4"/>
</dbReference>
<dbReference type="Pfam" id="PF07679">
    <property type="entry name" value="I-set"/>
    <property type="match status" value="1"/>
</dbReference>
<dbReference type="Pfam" id="PF00047">
    <property type="entry name" value="ig"/>
    <property type="match status" value="1"/>
</dbReference>
<dbReference type="Pfam" id="PF13927">
    <property type="entry name" value="Ig_3"/>
    <property type="match status" value="3"/>
</dbReference>
<dbReference type="SMART" id="SM00060">
    <property type="entry name" value="FN3"/>
    <property type="match status" value="4"/>
</dbReference>
<dbReference type="SMART" id="SM00409">
    <property type="entry name" value="IG"/>
    <property type="match status" value="6"/>
</dbReference>
<dbReference type="SMART" id="SM00408">
    <property type="entry name" value="IGc2"/>
    <property type="match status" value="5"/>
</dbReference>
<dbReference type="SUPFAM" id="SSF49265">
    <property type="entry name" value="Fibronectin type III"/>
    <property type="match status" value="2"/>
</dbReference>
<dbReference type="SUPFAM" id="SSF48726">
    <property type="entry name" value="Immunoglobulin"/>
    <property type="match status" value="6"/>
</dbReference>
<dbReference type="PROSITE" id="PS50853">
    <property type="entry name" value="FN3"/>
    <property type="match status" value="4"/>
</dbReference>
<dbReference type="PROSITE" id="PS50835">
    <property type="entry name" value="IG_LIKE"/>
    <property type="match status" value="6"/>
</dbReference>
<keyword id="KW-0025">Alternative splicing</keyword>
<keyword id="KW-0130">Cell adhesion</keyword>
<keyword id="KW-1003">Cell membrane</keyword>
<keyword id="KW-0217">Developmental protein</keyword>
<keyword id="KW-0221">Differentiation</keyword>
<keyword id="KW-1015">Disulfide bond</keyword>
<keyword id="KW-0272">Extracellular matrix</keyword>
<keyword id="KW-0325">Glycoprotein</keyword>
<keyword id="KW-0393">Immunoglobulin domain</keyword>
<keyword id="KW-0472">Membrane</keyword>
<keyword id="KW-0524">Neurogenesis</keyword>
<keyword id="KW-0597">Phosphoprotein</keyword>
<keyword id="KW-1267">Proteomics identification</keyword>
<keyword id="KW-1185">Reference proteome</keyword>
<keyword id="KW-0677">Repeat</keyword>
<keyword id="KW-0964">Secreted</keyword>
<keyword id="KW-0732">Signal</keyword>
<keyword id="KW-0812">Transmembrane</keyword>
<keyword id="KW-1133">Transmembrane helix</keyword>
<accession>O00533</accession>
<accession>B7ZL03</accession>
<accession>Q2M3G2</accession>
<accession>Q59FY0</accession>
<reference key="1">
    <citation type="journal article" date="1998" name="Hum. Genet.">
        <title>In silico-initiated cloning and molecular characterization of a novel human member of the L1 gene family of neural cell adhesion molecules.</title>
        <authorList>
            <person name="Wei M.-H."/>
            <person name="Karavanova I."/>
            <person name="Ivanov S.V."/>
            <person name="Popescu N.C."/>
            <person name="Keck C.L."/>
            <person name="Pack S."/>
            <person name="Eisen J.A."/>
            <person name="Lerman M.I."/>
        </authorList>
    </citation>
    <scope>NUCLEOTIDE SEQUENCE [MRNA] (ISOFORM 2)</scope>
    <scope>TISSUE SPECIFICITY</scope>
    <scope>VARIANTS ALA-287 AND VAL-1034</scope>
</reference>
<reference key="2">
    <citation type="submission" date="2005-03" db="EMBL/GenBank/DDBJ databases">
        <authorList>
            <person name="Totoki Y."/>
            <person name="Toyoda A."/>
            <person name="Takeda T."/>
            <person name="Sakaki Y."/>
            <person name="Tanaka A."/>
            <person name="Yokoyama S."/>
            <person name="Ohara O."/>
            <person name="Nagase T."/>
            <person name="Kikuno R.F."/>
        </authorList>
    </citation>
    <scope>NUCLEOTIDE SEQUENCE [LARGE SCALE MRNA] (ISOFORM 1)</scope>
    <scope>VARIANTS ALA-287 AND VAL-1034</scope>
    <source>
        <tissue>Brain</tissue>
    </source>
</reference>
<reference key="3">
    <citation type="journal article" date="2006" name="Nature">
        <title>The DNA sequence, annotation and analysis of human chromosome 3.</title>
        <authorList>
            <person name="Muzny D.M."/>
            <person name="Scherer S.E."/>
            <person name="Kaul R."/>
            <person name="Wang J."/>
            <person name="Yu J."/>
            <person name="Sudbrak R."/>
            <person name="Buhay C.J."/>
            <person name="Chen R."/>
            <person name="Cree A."/>
            <person name="Ding Y."/>
            <person name="Dugan-Rocha S."/>
            <person name="Gill R."/>
            <person name="Gunaratne P."/>
            <person name="Harris R.A."/>
            <person name="Hawes A.C."/>
            <person name="Hernandez J."/>
            <person name="Hodgson A.V."/>
            <person name="Hume J."/>
            <person name="Jackson A."/>
            <person name="Khan Z.M."/>
            <person name="Kovar-Smith C."/>
            <person name="Lewis L.R."/>
            <person name="Lozado R.J."/>
            <person name="Metzker M.L."/>
            <person name="Milosavljevic A."/>
            <person name="Miner G.R."/>
            <person name="Morgan M.B."/>
            <person name="Nazareth L.V."/>
            <person name="Scott G."/>
            <person name="Sodergren E."/>
            <person name="Song X.-Z."/>
            <person name="Steffen D."/>
            <person name="Wei S."/>
            <person name="Wheeler D.A."/>
            <person name="Wright M.W."/>
            <person name="Worley K.C."/>
            <person name="Yuan Y."/>
            <person name="Zhang Z."/>
            <person name="Adams C.Q."/>
            <person name="Ansari-Lari M.A."/>
            <person name="Ayele M."/>
            <person name="Brown M.J."/>
            <person name="Chen G."/>
            <person name="Chen Z."/>
            <person name="Clendenning J."/>
            <person name="Clerc-Blankenburg K.P."/>
            <person name="Chen R."/>
            <person name="Chen Z."/>
            <person name="Davis C."/>
            <person name="Delgado O."/>
            <person name="Dinh H.H."/>
            <person name="Dong W."/>
            <person name="Draper H."/>
            <person name="Ernst S."/>
            <person name="Fu G."/>
            <person name="Gonzalez-Garay M.L."/>
            <person name="Garcia D.K."/>
            <person name="Gillett W."/>
            <person name="Gu J."/>
            <person name="Hao B."/>
            <person name="Haugen E."/>
            <person name="Havlak P."/>
            <person name="He X."/>
            <person name="Hennig S."/>
            <person name="Hu S."/>
            <person name="Huang W."/>
            <person name="Jackson L.R."/>
            <person name="Jacob L.S."/>
            <person name="Kelly S.H."/>
            <person name="Kube M."/>
            <person name="Levy R."/>
            <person name="Li Z."/>
            <person name="Liu B."/>
            <person name="Liu J."/>
            <person name="Liu W."/>
            <person name="Lu J."/>
            <person name="Maheshwari M."/>
            <person name="Nguyen B.-V."/>
            <person name="Okwuonu G.O."/>
            <person name="Palmeiri A."/>
            <person name="Pasternak S."/>
            <person name="Perez L.M."/>
            <person name="Phelps K.A."/>
            <person name="Plopper F.J."/>
            <person name="Qiang B."/>
            <person name="Raymond C."/>
            <person name="Rodriguez R."/>
            <person name="Saenphimmachak C."/>
            <person name="Santibanez J."/>
            <person name="Shen H."/>
            <person name="Shen Y."/>
            <person name="Subramanian S."/>
            <person name="Tabor P.E."/>
            <person name="Verduzco D."/>
            <person name="Waldron L."/>
            <person name="Wang J."/>
            <person name="Wang J."/>
            <person name="Wang Q."/>
            <person name="Williams G.A."/>
            <person name="Wong G.K.-S."/>
            <person name="Yao Z."/>
            <person name="Zhang J."/>
            <person name="Zhang X."/>
            <person name="Zhao G."/>
            <person name="Zhou J."/>
            <person name="Zhou Y."/>
            <person name="Nelson D."/>
            <person name="Lehrach H."/>
            <person name="Reinhardt R."/>
            <person name="Naylor S.L."/>
            <person name="Yang H."/>
            <person name="Olson M."/>
            <person name="Weinstock G."/>
            <person name="Gibbs R.A."/>
        </authorList>
    </citation>
    <scope>NUCLEOTIDE SEQUENCE [LARGE SCALE GENOMIC DNA]</scope>
</reference>
<reference key="4">
    <citation type="journal article" date="2004" name="Genome Res.">
        <title>The status, quality, and expansion of the NIH full-length cDNA project: the Mammalian Gene Collection (MGC).</title>
        <authorList>
            <consortium name="The MGC Project Team"/>
        </authorList>
    </citation>
    <scope>NUCLEOTIDE SEQUENCE [LARGE SCALE MRNA] (ISOFORM 1)</scope>
    <scope>VARIANTS ALA-287 AND VAL-1034</scope>
    <source>
        <tissue>Brain</tissue>
    </source>
</reference>
<reference key="5">
    <citation type="journal article" date="2005" name="J. Proteome Res.">
        <title>Human plasma N-glycoproteome analysis by immunoaffinity subtraction, hydrazide chemistry, and mass spectrometry.</title>
        <authorList>
            <person name="Liu T."/>
            <person name="Qian W.-J."/>
            <person name="Gritsenko M.A."/>
            <person name="Camp D.G. II"/>
            <person name="Monroe M.E."/>
            <person name="Moore R.J."/>
            <person name="Smith R.D."/>
        </authorList>
    </citation>
    <scope>GLYCOSYLATION [LARGE SCALE ANALYSIS] AT ASN-476; ASN-482; ASN-562; ASN-767; ASN-822 AND ASN-1026</scope>
    <source>
        <tissue>Plasma</tissue>
    </source>
</reference>
<reference key="6">
    <citation type="journal article" date="2006" name="Science">
        <title>The consensus coding sequences of human breast and colorectal cancers.</title>
        <authorList>
            <person name="Sjoeblom T."/>
            <person name="Jones S."/>
            <person name="Wood L.D."/>
            <person name="Parsons D.W."/>
            <person name="Lin J."/>
            <person name="Barber T.D."/>
            <person name="Mandelker D."/>
            <person name="Leary R.J."/>
            <person name="Ptak J."/>
            <person name="Silliman N."/>
            <person name="Szabo S."/>
            <person name="Buckhaults P."/>
            <person name="Farrell C."/>
            <person name="Meeh P."/>
            <person name="Markowitz S.D."/>
            <person name="Willis J."/>
            <person name="Dawson D."/>
            <person name="Willson J.K.V."/>
            <person name="Gazdar A.F."/>
            <person name="Hartigan J."/>
            <person name="Wu L."/>
            <person name="Liu C."/>
            <person name="Parmigiani G."/>
            <person name="Park B.H."/>
            <person name="Bachman K.E."/>
            <person name="Papadopoulos N."/>
            <person name="Vogelstein B."/>
            <person name="Kinzler K.W."/>
            <person name="Velculescu V.E."/>
        </authorList>
    </citation>
    <scope>VARIANT [LARGE SCALE ANALYSIS] ILE-411</scope>
</reference>
<gene>
    <name type="primary">CHL1</name>
    <name type="synonym">CALL</name>
</gene>
<feature type="signal peptide" evidence="3">
    <location>
        <begin position="1"/>
        <end position="24"/>
    </location>
</feature>
<feature type="chain" id="PRO_0000247896" description="Neural cell adhesion molecule L1-like protein">
    <location>
        <begin position="25"/>
        <end position="1208"/>
    </location>
</feature>
<feature type="chain" id="PRO_0000314777" description="Processed neural cell adhesion molecule L1-like protein" evidence="3">
    <location>
        <begin position="25"/>
        <end status="unknown"/>
    </location>
</feature>
<feature type="topological domain" description="Extracellular" evidence="3">
    <location>
        <begin position="25"/>
        <end position="1082"/>
    </location>
</feature>
<feature type="transmembrane region" description="Helical" evidence="3">
    <location>
        <begin position="1083"/>
        <end position="1103"/>
    </location>
</feature>
<feature type="topological domain" description="Cytoplasmic" evidence="3">
    <location>
        <begin position="1104"/>
        <end position="1208"/>
    </location>
</feature>
<feature type="domain" description="Ig-like C2-type 1">
    <location>
        <begin position="35"/>
        <end position="124"/>
    </location>
</feature>
<feature type="domain" description="Ig-like C2-type 2">
    <location>
        <begin position="128"/>
        <end position="223"/>
    </location>
</feature>
<feature type="domain" description="Ig-like C2-type 3">
    <location>
        <begin position="235"/>
        <end position="328"/>
    </location>
</feature>
<feature type="domain" description="Ig-like C2-type 4">
    <location>
        <begin position="331"/>
        <end position="417"/>
    </location>
</feature>
<feature type="domain" description="Ig-like C2-type 5">
    <location>
        <begin position="423"/>
        <end position="510"/>
    </location>
</feature>
<feature type="domain" description="Ig-like C2-type 6">
    <location>
        <begin position="515"/>
        <end position="607"/>
    </location>
</feature>
<feature type="domain" description="Fibronectin type-III 1" evidence="5">
    <location>
        <begin position="614"/>
        <end position="709"/>
    </location>
</feature>
<feature type="domain" description="Fibronectin type-III 2" evidence="5">
    <location>
        <begin position="714"/>
        <end position="807"/>
    </location>
</feature>
<feature type="domain" description="Fibronectin type-III 3" evidence="5">
    <location>
        <begin position="809"/>
        <end position="914"/>
    </location>
</feature>
<feature type="domain" description="Fibronectin type-III 4" evidence="5">
    <location>
        <begin position="918"/>
        <end position="1015"/>
    </location>
</feature>
<feature type="region of interest" description="Disordered" evidence="6">
    <location>
        <begin position="693"/>
        <end position="716"/>
    </location>
</feature>
<feature type="region of interest" description="Disordered" evidence="6">
    <location>
        <begin position="1131"/>
        <end position="1163"/>
    </location>
</feature>
<feature type="region of interest" description="Disordered" evidence="6">
    <location>
        <begin position="1189"/>
        <end position="1208"/>
    </location>
</feature>
<feature type="short sequence motif" description="DGEA">
    <location>
        <begin position="555"/>
        <end position="558"/>
    </location>
</feature>
<feature type="short sequence motif" description="FIG[AQ]Y">
    <location>
        <begin position="1181"/>
        <end position="1185"/>
    </location>
</feature>
<feature type="compositionally biased region" description="Polar residues" evidence="6">
    <location>
        <begin position="1149"/>
        <end position="1161"/>
    </location>
</feature>
<feature type="compositionally biased region" description="Polar residues" evidence="6">
    <location>
        <begin position="1194"/>
        <end position="1208"/>
    </location>
</feature>
<feature type="site" description="Cleavage; by ADAM8" evidence="1">
    <location>
        <begin position="753"/>
        <end position="754"/>
    </location>
</feature>
<feature type="site" description="Cleavage; by ADAM8" evidence="1">
    <location>
        <begin position="1039"/>
        <end position="1040"/>
    </location>
</feature>
<feature type="modified residue" description="Phosphoserine" evidence="2">
    <location>
        <position position="1147"/>
    </location>
</feature>
<feature type="modified residue" description="Phosphoserine" evidence="2">
    <location>
        <position position="1160"/>
    </location>
</feature>
<feature type="modified residue" description="Phosphoserine" evidence="2">
    <location>
        <position position="1180"/>
    </location>
</feature>
<feature type="glycosylation site" description="N-linked (GlcNAc...) asparagine" evidence="3">
    <location>
        <position position="299"/>
    </location>
</feature>
<feature type="glycosylation site" description="N-linked (GlcNAc...) asparagine" evidence="8">
    <location>
        <position position="476"/>
    </location>
</feature>
<feature type="glycosylation site" description="N-linked (GlcNAc...) asparagine" evidence="8">
    <location>
        <position position="482"/>
    </location>
</feature>
<feature type="glycosylation site" description="N-linked (GlcNAc...) asparagine" evidence="8">
    <location>
        <position position="562"/>
    </location>
</feature>
<feature type="glycosylation site" description="N-linked (GlcNAc...) asparagine" evidence="3">
    <location>
        <position position="580"/>
    </location>
</feature>
<feature type="glycosylation site" description="N-linked (GlcNAc...) asparagine" evidence="8">
    <location>
        <position position="767"/>
    </location>
</feature>
<feature type="glycosylation site" description="N-linked (GlcNAc...) asparagine" evidence="8">
    <location>
        <position position="822"/>
    </location>
</feature>
<feature type="glycosylation site" description="N-linked (GlcNAc...) asparagine" evidence="3">
    <location>
        <position position="945"/>
    </location>
</feature>
<feature type="glycosylation site" description="N-linked (GlcNAc...) asparagine" evidence="8">
    <location>
        <position position="1026"/>
    </location>
</feature>
<feature type="disulfide bond" evidence="4">
    <location>
        <begin position="57"/>
        <end position="109"/>
    </location>
</feature>
<feature type="disulfide bond" evidence="4">
    <location>
        <begin position="153"/>
        <end position="204"/>
    </location>
</feature>
<feature type="disulfide bond" evidence="4">
    <location>
        <begin position="262"/>
        <end position="310"/>
    </location>
</feature>
<feature type="disulfide bond" evidence="4">
    <location>
        <begin position="352"/>
        <end position="401"/>
    </location>
</feature>
<feature type="disulfide bond" evidence="4">
    <location>
        <begin position="445"/>
        <end position="494"/>
    </location>
</feature>
<feature type="disulfide bond" evidence="4">
    <location>
        <begin position="536"/>
        <end position="591"/>
    </location>
</feature>
<feature type="splice variant" id="VSP_020082" description="In isoform 2." evidence="12">
    <original>S</original>
    <variation>LKHANDSSSSTEIGSKA</variation>
    <location>
        <position position="227"/>
    </location>
</feature>
<feature type="sequence variant" id="VAR_027167" description="In dbSNP:rs2272522.">
    <original>L</original>
    <variation>F</variation>
    <location>
        <position position="17"/>
    </location>
</feature>
<feature type="sequence variant" id="VAR_027168" description="In dbSNP:rs13060847." evidence="7 10 11">
    <original>T</original>
    <variation>A</variation>
    <location>
        <position position="287"/>
    </location>
</feature>
<feature type="sequence variant" id="VAR_035505" description="In a colorectal cancer sample; somatic mutation." evidence="9">
    <original>L</original>
    <variation>I</variation>
    <location>
        <position position="411"/>
    </location>
</feature>
<feature type="sequence variant" id="VAR_027169" description="In dbSNP:rs6442827." evidence="7 10 11">
    <original>I</original>
    <variation>V</variation>
    <location>
        <position position="1034"/>
    </location>
</feature>
<feature type="glycosylation site" description="N-linked (GlcNAc...) asparagine" evidence="3">
    <location sequence="O00533-2">
        <position position="231"/>
    </location>
</feature>
<name>NCHL1_HUMAN</name>
<sequence length="1208" mass="135071">MEPLLLGRGLIVYLMFLLLKFSKAIEIPSSVQQVPTIIKQSKVQVAFPFDEYFQIECEAKGNPEPTFSWTKDGNPFYFTDHRIIPSNNSGTFRIPNEGHISHFQGKYRCFASNKLGIAMSEEIEFIVPSVPKFPKEKIDPLEVEEGDPIVLPCNPPKGLPPLHIYWMNIELEHIEQDERVYMSQKGDLYFANVEEKDSRNDYCCFAAFPRLRTIVQKMPMKLTVNSSNSIKQRKPKLLLPPTESGSESSITILKGEILLLECFAEGLPTPQVDWNKIGGDLPKGRETKENYGKTLKIENVSYQDKGNYRCTASNFLGTATHDFHVIVEEPPRWTKKPQSAVYSTGSNGILLCEAEGEPQPTIKWRVNGSPVDNHPFAGDVVFPREISFTNLQPNHTAVYQCEASNVHGTILANANIDVVDVRPLIQTKDGENYATVVGYSAFLHCEFFASPEAVVSWQKVEEVKPLEGRRYHIYENGTLQINRTTEEDAGSYSCWVENAIGKTAVTANLDIRNATKLRVSPKNPRIPKLHMLELHCESKCDSHLKHSLKLSWSKDGEAFEINGTEDGRIIIDGANLTISNVTLEDQGIYCCSAHTALDSAADITQVTVLDVPDPPENLHLSERQNRSVRLTWEAGADHNSNISEYIVEFEGNKEEPGRWEELTRVQGKKTTVILPLAPFVRYQFRVIAVNEVGRSQPSQPSDHHETPPAAPDRNPQNIRVQASQPKEMIIKWEPLKSMEQNGPGLEYRVTWKPQGAPVEWEEETVTNHTLRVMTPAVYAPYDVKVQAINQLGSGPDPQSVTLYSGEDYPDTAPVIHGVDVINSTLVKVTWSTVPKDRVHGRLKGYQINWWKTKSLLDGRTHPKEVNILRFSGQRNSGMVPSLDAFSEFHLTVLAYNSKGAGPESEPYIFQTPEGVPEQPTFLKVIKVDKDTATLSWGLPKKLNGNLTGYLLQYQIINDTYEIGELNDINITTPSKPSWHLSNLNATTKYKFYLRACTSQGCGKPITEESSTLGEGSKGIGKISGVNLTQKTHPIEVFEPGAEHIVRLMTKNWGDNDSIFQDVIETRGREYAGLYDDISTQGWFIGLMCAIALLTLLLLTVCFVKRNRGGKYSVKEKEDLHPDPEIQSVKDETFGEYSDSDEKPLKGSLRSLNRDMQPTESADSLVEYGEGDHGLFSEDGSFIGAYAGSKEKGSVESNGSSTATFPLRA</sequence>
<organism>
    <name type="scientific">Homo sapiens</name>
    <name type="common">Human</name>
    <dbReference type="NCBI Taxonomy" id="9606"/>
    <lineage>
        <taxon>Eukaryota</taxon>
        <taxon>Metazoa</taxon>
        <taxon>Chordata</taxon>
        <taxon>Craniata</taxon>
        <taxon>Vertebrata</taxon>
        <taxon>Euteleostomi</taxon>
        <taxon>Mammalia</taxon>
        <taxon>Eutheria</taxon>
        <taxon>Euarchontoglires</taxon>
        <taxon>Primates</taxon>
        <taxon>Haplorrhini</taxon>
        <taxon>Catarrhini</taxon>
        <taxon>Hominidae</taxon>
        <taxon>Homo</taxon>
    </lineage>
</organism>
<proteinExistence type="evidence at protein level"/>
<comment type="function">
    <text evidence="1">Extracellular matrix and cell adhesion protein that plays a role in nervous system development and in synaptic plasticity. Both soluble and membranous forms promote neurite outgrowth of cerebellar and hippocampal neurons and suppress neuronal cell death. Plays a role in neuronal positioning of pyramidal neurons and in regulation of both the number of interneurons and the efficacy of GABAergic synapses. May play a role in regulating cell migration in nerve regeneration and cortical development. Potentiates integrin-dependent cell migration towards extracellular matrix proteins. Recruits ANK3 to the plasma membrane (By similarity).</text>
</comment>
<comment type="subunit">
    <text evidence="1">May interact with L1CAM. May interact with ITGB1/ITGA1 heterodimer and ITGB1/ITGA2 heterodimer as well as with ANK3 (By similarity).</text>
</comment>
<comment type="subcellular location">
    <subcellularLocation>
        <location evidence="1">Cell membrane</location>
        <topology evidence="1">Single-pass type I membrane protein</topology>
    </subcellularLocation>
    <text evidence="1">Soluble forms produced by cleavage/shedding also exist.</text>
</comment>
<comment type="subcellular location">
    <molecule>Processed neural cell adhesion molecule L1-like protein</molecule>
    <subcellularLocation>
        <location evidence="1">Secreted</location>
        <location evidence="1">Extracellular space</location>
        <location evidence="1">Extracellular matrix</location>
    </subcellularLocation>
</comment>
<comment type="alternative products">
    <event type="alternative splicing"/>
    <isoform>
        <id>O00533-1</id>
        <name>1</name>
        <sequence type="displayed"/>
    </isoform>
    <isoform>
        <id>O00533-2</id>
        <name>2</name>
        <sequence type="described" ref="VSP_020082"/>
    </isoform>
</comment>
<comment type="tissue specificity">
    <text evidence="10">Expressed in the fetal and adult brain as well as in Schwann cell culture. Also detected in adult peripheral tissues.</text>
</comment>
<comment type="domain">
    <text>The FIG[AQ]Y motif seems to be an ankyrin recruitment region.</text>
</comment>
<comment type="domain">
    <text>The DGEA motif seems to be a recognition site for integrin.</text>
</comment>
<comment type="PTM">
    <text evidence="2">Cleavage by metalloprotease ADAM8 in the extracellular part generates 2 soluble forms (125 kDa and 165 kDa) in vitro and is inhibited by metalloprotease inhibitors (By similarity). Cleaved by BACE1 (By similarity).</text>
</comment>
<comment type="PTM">
    <text evidence="1">N-glycosylated. Contains N-linked oligosaccharides with a sulfated carbohydrate structure type HNK-1 (SO4-3-GlcUABeta1,3GalBeta1,4GlcNAc) (By similarity).</text>
</comment>
<comment type="PTM">
    <text evidence="1">O-glycosylated.</text>
</comment>
<comment type="similarity">
    <text evidence="13">Belongs to the immunoglobulin superfamily. L1/neurofascin/NgCAM family.</text>
</comment>
<comment type="sequence caution" evidence="13">
    <conflict type="erroneous initiation">
        <sequence resource="EMBL-CDS" id="BAD92566"/>
    </conflict>
    <text>Extended N-terminus.</text>
</comment>